<feature type="chain" id="PRO_0000336274" description="UPF0102 protein CYA_0680">
    <location>
        <begin position="1"/>
        <end position="133"/>
    </location>
</feature>
<comment type="similarity">
    <text evidence="1">Belongs to the UPF0102 family.</text>
</comment>
<evidence type="ECO:0000255" key="1">
    <source>
        <dbReference type="HAMAP-Rule" id="MF_00048"/>
    </source>
</evidence>
<name>Y680_SYNJA</name>
<sequence>MDPLPRRASLQNTGNVGEGWVRQYLCQQGWQILAQRWRCPWGELDLVAHKADVLIFVEVKTRSPGSWDRGGLLAVGIPKQRRLIRAAQAFLSQHPHLSELSCRFDVALIERRASGEGVSYALVDYLQAAFEIC</sequence>
<proteinExistence type="inferred from homology"/>
<protein>
    <recommendedName>
        <fullName evidence="1">UPF0102 protein CYA_0680</fullName>
    </recommendedName>
</protein>
<organism>
    <name type="scientific">Synechococcus sp. (strain JA-3-3Ab)</name>
    <name type="common">Cyanobacteria bacterium Yellowstone A-Prime</name>
    <dbReference type="NCBI Taxonomy" id="321327"/>
    <lineage>
        <taxon>Bacteria</taxon>
        <taxon>Bacillati</taxon>
        <taxon>Cyanobacteriota</taxon>
        <taxon>Cyanophyceae</taxon>
        <taxon>Synechococcales</taxon>
        <taxon>Synechococcaceae</taxon>
        <taxon>Synechococcus</taxon>
    </lineage>
</organism>
<dbReference type="EMBL" id="CP000239">
    <property type="protein sequence ID" value="ABC98892.1"/>
    <property type="molecule type" value="Genomic_DNA"/>
</dbReference>
<dbReference type="RefSeq" id="WP_011429574.1">
    <property type="nucleotide sequence ID" value="NC_007775.1"/>
</dbReference>
<dbReference type="SMR" id="Q2JWH1"/>
<dbReference type="STRING" id="321327.CYA_0680"/>
<dbReference type="KEGG" id="cya:CYA_0680"/>
<dbReference type="eggNOG" id="COG0792">
    <property type="taxonomic scope" value="Bacteria"/>
</dbReference>
<dbReference type="HOGENOM" id="CLU_115353_3_0_3"/>
<dbReference type="OrthoDB" id="9802516at2"/>
<dbReference type="Proteomes" id="UP000008818">
    <property type="component" value="Chromosome"/>
</dbReference>
<dbReference type="GO" id="GO:0003676">
    <property type="term" value="F:nucleic acid binding"/>
    <property type="evidence" value="ECO:0007669"/>
    <property type="project" value="InterPro"/>
</dbReference>
<dbReference type="Gene3D" id="3.40.1350.10">
    <property type="match status" value="1"/>
</dbReference>
<dbReference type="HAMAP" id="MF_00048">
    <property type="entry name" value="UPF0102"/>
    <property type="match status" value="1"/>
</dbReference>
<dbReference type="InterPro" id="IPR011335">
    <property type="entry name" value="Restrct_endonuc-II-like"/>
</dbReference>
<dbReference type="InterPro" id="IPR011856">
    <property type="entry name" value="tRNA_endonuc-like_dom_sf"/>
</dbReference>
<dbReference type="InterPro" id="IPR003509">
    <property type="entry name" value="UPF0102_YraN-like"/>
</dbReference>
<dbReference type="NCBIfam" id="NF009150">
    <property type="entry name" value="PRK12497.1-3"/>
    <property type="match status" value="1"/>
</dbReference>
<dbReference type="NCBIfam" id="TIGR00252">
    <property type="entry name" value="YraN family protein"/>
    <property type="match status" value="1"/>
</dbReference>
<dbReference type="PANTHER" id="PTHR34039">
    <property type="entry name" value="UPF0102 PROTEIN YRAN"/>
    <property type="match status" value="1"/>
</dbReference>
<dbReference type="PANTHER" id="PTHR34039:SF1">
    <property type="entry name" value="UPF0102 PROTEIN YRAN"/>
    <property type="match status" value="1"/>
</dbReference>
<dbReference type="Pfam" id="PF02021">
    <property type="entry name" value="UPF0102"/>
    <property type="match status" value="1"/>
</dbReference>
<dbReference type="SUPFAM" id="SSF52980">
    <property type="entry name" value="Restriction endonuclease-like"/>
    <property type="match status" value="1"/>
</dbReference>
<accession>Q2JWH1</accession>
<gene>
    <name type="ordered locus">CYA_0680</name>
</gene>
<reference key="1">
    <citation type="journal article" date="2007" name="ISME J.">
        <title>Population level functional diversity in a microbial community revealed by comparative genomic and metagenomic analyses.</title>
        <authorList>
            <person name="Bhaya D."/>
            <person name="Grossman A.R."/>
            <person name="Steunou A.-S."/>
            <person name="Khuri N."/>
            <person name="Cohan F.M."/>
            <person name="Hamamura N."/>
            <person name="Melendrez M.C."/>
            <person name="Bateson M.M."/>
            <person name="Ward D.M."/>
            <person name="Heidelberg J.F."/>
        </authorList>
    </citation>
    <scope>NUCLEOTIDE SEQUENCE [LARGE SCALE GENOMIC DNA]</scope>
    <source>
        <strain>JA-3-3Ab</strain>
    </source>
</reference>